<sequence length="358" mass="39612">MRKIIHIDMDCYFAAVEMRDFPEYRGKPLAVGGSSDRRGVISTCSYEARKFGVRSAMATAYAFKLCPDLILVPGRMQVYKDVSLQIREIFSRYTQLIEPLSLDEAYLDVSECQQYKGSATLIAQAIRRDILAETGLTASAGIAPVKFLAKVASDLNKPNGQYVITPETLPEFVKTLSLRKIPGVGKVTAEKLSSLGLNTCGDVQAYSKPELLARFGKFGGVLIERSQGIDERGISADRERKSVGVETTLAKDIYSLEQCQQVMPGLIQELALRLSRSAKERKIHKQVVKLKFNDFKQTTIEHRSDEVSIVMFYDLLAQAMARQEGRGIRLLGISVGLADSILAVPEIPNAQTQLDLAL</sequence>
<name>DPO4_SHEB8</name>
<organism>
    <name type="scientific">Shewanella baltica (strain OS185)</name>
    <dbReference type="NCBI Taxonomy" id="402882"/>
    <lineage>
        <taxon>Bacteria</taxon>
        <taxon>Pseudomonadati</taxon>
        <taxon>Pseudomonadota</taxon>
        <taxon>Gammaproteobacteria</taxon>
        <taxon>Alteromonadales</taxon>
        <taxon>Shewanellaceae</taxon>
        <taxon>Shewanella</taxon>
    </lineage>
</organism>
<accession>A6WRW5</accession>
<evidence type="ECO:0000255" key="1">
    <source>
        <dbReference type="HAMAP-Rule" id="MF_01113"/>
    </source>
</evidence>
<keyword id="KW-0963">Cytoplasm</keyword>
<keyword id="KW-0227">DNA damage</keyword>
<keyword id="KW-0234">DNA repair</keyword>
<keyword id="KW-0235">DNA replication</keyword>
<keyword id="KW-0238">DNA-binding</keyword>
<keyword id="KW-0239">DNA-directed DNA polymerase</keyword>
<keyword id="KW-0460">Magnesium</keyword>
<keyword id="KW-0479">Metal-binding</keyword>
<keyword id="KW-0515">Mutator protein</keyword>
<keyword id="KW-0548">Nucleotidyltransferase</keyword>
<keyword id="KW-0808">Transferase</keyword>
<protein>
    <recommendedName>
        <fullName evidence="1">DNA polymerase IV</fullName>
        <shortName evidence="1">Pol IV</shortName>
        <ecNumber evidence="1">2.7.7.7</ecNumber>
    </recommendedName>
</protein>
<dbReference type="EC" id="2.7.7.7" evidence="1"/>
<dbReference type="EMBL" id="CP000753">
    <property type="protein sequence ID" value="ABS09554.1"/>
    <property type="molecule type" value="Genomic_DNA"/>
</dbReference>
<dbReference type="RefSeq" id="WP_012090032.1">
    <property type="nucleotide sequence ID" value="NC_009665.1"/>
</dbReference>
<dbReference type="SMR" id="A6WRW5"/>
<dbReference type="KEGG" id="sbm:Shew185_3427"/>
<dbReference type="HOGENOM" id="CLU_012348_1_2_6"/>
<dbReference type="GO" id="GO:0005829">
    <property type="term" value="C:cytosol"/>
    <property type="evidence" value="ECO:0007669"/>
    <property type="project" value="TreeGrafter"/>
</dbReference>
<dbReference type="GO" id="GO:0003684">
    <property type="term" value="F:damaged DNA binding"/>
    <property type="evidence" value="ECO:0007669"/>
    <property type="project" value="InterPro"/>
</dbReference>
<dbReference type="GO" id="GO:0003887">
    <property type="term" value="F:DNA-directed DNA polymerase activity"/>
    <property type="evidence" value="ECO:0007669"/>
    <property type="project" value="UniProtKB-UniRule"/>
</dbReference>
<dbReference type="GO" id="GO:0000287">
    <property type="term" value="F:magnesium ion binding"/>
    <property type="evidence" value="ECO:0007669"/>
    <property type="project" value="UniProtKB-UniRule"/>
</dbReference>
<dbReference type="GO" id="GO:0006261">
    <property type="term" value="P:DNA-templated DNA replication"/>
    <property type="evidence" value="ECO:0007669"/>
    <property type="project" value="UniProtKB-UniRule"/>
</dbReference>
<dbReference type="GO" id="GO:0042276">
    <property type="term" value="P:error-prone translesion synthesis"/>
    <property type="evidence" value="ECO:0007669"/>
    <property type="project" value="TreeGrafter"/>
</dbReference>
<dbReference type="GO" id="GO:0009432">
    <property type="term" value="P:SOS response"/>
    <property type="evidence" value="ECO:0007669"/>
    <property type="project" value="TreeGrafter"/>
</dbReference>
<dbReference type="CDD" id="cd03586">
    <property type="entry name" value="PolY_Pol_IV_kappa"/>
    <property type="match status" value="1"/>
</dbReference>
<dbReference type="FunFam" id="1.10.150.20:FF:000019">
    <property type="entry name" value="DNA polymerase IV"/>
    <property type="match status" value="1"/>
</dbReference>
<dbReference type="FunFam" id="3.30.70.270:FF:000002">
    <property type="entry name" value="DNA polymerase IV"/>
    <property type="match status" value="1"/>
</dbReference>
<dbReference type="FunFam" id="3.40.1170.60:FF:000001">
    <property type="entry name" value="DNA polymerase IV"/>
    <property type="match status" value="1"/>
</dbReference>
<dbReference type="Gene3D" id="3.30.70.270">
    <property type="match status" value="1"/>
</dbReference>
<dbReference type="Gene3D" id="3.40.1170.60">
    <property type="match status" value="1"/>
</dbReference>
<dbReference type="Gene3D" id="1.10.150.20">
    <property type="entry name" value="5' to 3' exonuclease, C-terminal subdomain"/>
    <property type="match status" value="1"/>
</dbReference>
<dbReference type="Gene3D" id="3.30.1490.100">
    <property type="entry name" value="DNA polymerase, Y-family, little finger domain"/>
    <property type="match status" value="1"/>
</dbReference>
<dbReference type="HAMAP" id="MF_01113">
    <property type="entry name" value="DNApol_IV"/>
    <property type="match status" value="1"/>
</dbReference>
<dbReference type="InterPro" id="IPR043502">
    <property type="entry name" value="DNA/RNA_pol_sf"/>
</dbReference>
<dbReference type="InterPro" id="IPR036775">
    <property type="entry name" value="DNA_pol_Y-fam_lit_finger_sf"/>
</dbReference>
<dbReference type="InterPro" id="IPR017961">
    <property type="entry name" value="DNA_pol_Y-fam_little_finger"/>
</dbReference>
<dbReference type="InterPro" id="IPR050116">
    <property type="entry name" value="DNA_polymerase-Y"/>
</dbReference>
<dbReference type="InterPro" id="IPR022880">
    <property type="entry name" value="DNApol_IV"/>
</dbReference>
<dbReference type="InterPro" id="IPR053848">
    <property type="entry name" value="IMS_HHH_1"/>
</dbReference>
<dbReference type="InterPro" id="IPR043128">
    <property type="entry name" value="Rev_trsase/Diguanyl_cyclase"/>
</dbReference>
<dbReference type="InterPro" id="IPR001126">
    <property type="entry name" value="UmuC"/>
</dbReference>
<dbReference type="NCBIfam" id="NF002677">
    <property type="entry name" value="PRK02406.1"/>
    <property type="match status" value="1"/>
</dbReference>
<dbReference type="PANTHER" id="PTHR11076:SF33">
    <property type="entry name" value="DNA POLYMERASE KAPPA"/>
    <property type="match status" value="1"/>
</dbReference>
<dbReference type="PANTHER" id="PTHR11076">
    <property type="entry name" value="DNA REPAIR POLYMERASE UMUC / TRANSFERASE FAMILY MEMBER"/>
    <property type="match status" value="1"/>
</dbReference>
<dbReference type="Pfam" id="PF00817">
    <property type="entry name" value="IMS"/>
    <property type="match status" value="1"/>
</dbReference>
<dbReference type="Pfam" id="PF11799">
    <property type="entry name" value="IMS_C"/>
    <property type="match status" value="1"/>
</dbReference>
<dbReference type="Pfam" id="PF21999">
    <property type="entry name" value="IMS_HHH_1"/>
    <property type="match status" value="1"/>
</dbReference>
<dbReference type="SUPFAM" id="SSF56672">
    <property type="entry name" value="DNA/RNA polymerases"/>
    <property type="match status" value="1"/>
</dbReference>
<dbReference type="SUPFAM" id="SSF100879">
    <property type="entry name" value="Lesion bypass DNA polymerase (Y-family), little finger domain"/>
    <property type="match status" value="1"/>
</dbReference>
<dbReference type="PROSITE" id="PS50173">
    <property type="entry name" value="UMUC"/>
    <property type="match status" value="1"/>
</dbReference>
<comment type="function">
    <text evidence="1">Poorly processive, error-prone DNA polymerase involved in untargeted mutagenesis. Copies undamaged DNA at stalled replication forks, which arise in vivo from mismatched or misaligned primer ends. These misaligned primers can be extended by PolIV. Exhibits no 3'-5' exonuclease (proofreading) activity. May be involved in translesional synthesis, in conjunction with the beta clamp from PolIII.</text>
</comment>
<comment type="catalytic activity">
    <reaction evidence="1">
        <text>DNA(n) + a 2'-deoxyribonucleoside 5'-triphosphate = DNA(n+1) + diphosphate</text>
        <dbReference type="Rhea" id="RHEA:22508"/>
        <dbReference type="Rhea" id="RHEA-COMP:17339"/>
        <dbReference type="Rhea" id="RHEA-COMP:17340"/>
        <dbReference type="ChEBI" id="CHEBI:33019"/>
        <dbReference type="ChEBI" id="CHEBI:61560"/>
        <dbReference type="ChEBI" id="CHEBI:173112"/>
        <dbReference type="EC" id="2.7.7.7"/>
    </reaction>
</comment>
<comment type="cofactor">
    <cofactor evidence="1">
        <name>Mg(2+)</name>
        <dbReference type="ChEBI" id="CHEBI:18420"/>
    </cofactor>
    <text evidence="1">Binds 2 magnesium ions per subunit.</text>
</comment>
<comment type="subunit">
    <text evidence="1">Monomer.</text>
</comment>
<comment type="subcellular location">
    <subcellularLocation>
        <location evidence="1">Cytoplasm</location>
    </subcellularLocation>
</comment>
<comment type="similarity">
    <text evidence="1">Belongs to the DNA polymerase type-Y family.</text>
</comment>
<reference key="1">
    <citation type="submission" date="2007-07" db="EMBL/GenBank/DDBJ databases">
        <title>Complete sequence of chromosome of Shewanella baltica OS185.</title>
        <authorList>
            <consortium name="US DOE Joint Genome Institute"/>
            <person name="Copeland A."/>
            <person name="Lucas S."/>
            <person name="Lapidus A."/>
            <person name="Barry K."/>
            <person name="Glavina del Rio T."/>
            <person name="Dalin E."/>
            <person name="Tice H."/>
            <person name="Pitluck S."/>
            <person name="Sims D."/>
            <person name="Brettin T."/>
            <person name="Bruce D."/>
            <person name="Detter J.C."/>
            <person name="Han C."/>
            <person name="Schmutz J."/>
            <person name="Larimer F."/>
            <person name="Land M."/>
            <person name="Hauser L."/>
            <person name="Kyrpides N."/>
            <person name="Mikhailova N."/>
            <person name="Brettar I."/>
            <person name="Rodrigues J."/>
            <person name="Konstantinidis K."/>
            <person name="Tiedje J."/>
            <person name="Richardson P."/>
        </authorList>
    </citation>
    <scope>NUCLEOTIDE SEQUENCE [LARGE SCALE GENOMIC DNA]</scope>
    <source>
        <strain>OS185</strain>
    </source>
</reference>
<feature type="chain" id="PRO_1000084927" description="DNA polymerase IV">
    <location>
        <begin position="1"/>
        <end position="358"/>
    </location>
</feature>
<feature type="domain" description="UmuC" evidence="1">
    <location>
        <begin position="4"/>
        <end position="185"/>
    </location>
</feature>
<feature type="active site" evidence="1">
    <location>
        <position position="104"/>
    </location>
</feature>
<feature type="binding site" evidence="1">
    <location>
        <position position="8"/>
    </location>
    <ligand>
        <name>Mg(2+)</name>
        <dbReference type="ChEBI" id="CHEBI:18420"/>
    </ligand>
</feature>
<feature type="binding site" evidence="1">
    <location>
        <position position="103"/>
    </location>
    <ligand>
        <name>Mg(2+)</name>
        <dbReference type="ChEBI" id="CHEBI:18420"/>
    </ligand>
</feature>
<feature type="site" description="Substrate discrimination" evidence="1">
    <location>
        <position position="13"/>
    </location>
</feature>
<proteinExistence type="inferred from homology"/>
<gene>
    <name evidence="1" type="primary">dinB</name>
    <name type="ordered locus">Shew185_3427</name>
</gene>